<name>NUOCD_AZOVD</name>
<accession>C1DL16</accession>
<proteinExistence type="inferred from homology"/>
<comment type="function">
    <text evidence="1">NDH-1 shuttles electrons from NADH, via FMN and iron-sulfur (Fe-S) centers, to quinones in the respiratory chain. The immediate electron acceptor for the enzyme in this species is believed to be ubiquinone. Couples the redox reaction to proton translocation (for every two electrons transferred, four hydrogen ions are translocated across the cytoplasmic membrane), and thus conserves the redox energy in a proton gradient.</text>
</comment>
<comment type="catalytic activity">
    <reaction evidence="1">
        <text>a quinone + NADH + 5 H(+)(in) = a quinol + NAD(+) + 4 H(+)(out)</text>
        <dbReference type="Rhea" id="RHEA:57888"/>
        <dbReference type="ChEBI" id="CHEBI:15378"/>
        <dbReference type="ChEBI" id="CHEBI:24646"/>
        <dbReference type="ChEBI" id="CHEBI:57540"/>
        <dbReference type="ChEBI" id="CHEBI:57945"/>
        <dbReference type="ChEBI" id="CHEBI:132124"/>
    </reaction>
</comment>
<comment type="subunit">
    <text evidence="1">NDH-1 is composed of 13 different subunits. Subunits NuoB, CD, E, F, and G constitute the peripheral sector of the complex.</text>
</comment>
<comment type="subcellular location">
    <subcellularLocation>
        <location evidence="1">Cell inner membrane</location>
        <topology evidence="1">Peripheral membrane protein</topology>
        <orientation evidence="1">Cytoplasmic side</orientation>
    </subcellularLocation>
</comment>
<comment type="similarity">
    <text evidence="1">In the N-terminal section; belongs to the complex I 30 kDa subunit family.</text>
</comment>
<comment type="similarity">
    <text evidence="1">In the C-terminal section; belongs to the complex I 49 kDa subunit family.</text>
</comment>
<reference key="1">
    <citation type="journal article" date="2009" name="J. Bacteriol.">
        <title>Genome sequence of Azotobacter vinelandii, an obligate aerobe specialized to support diverse anaerobic metabolic processes.</title>
        <authorList>
            <person name="Setubal J.C."/>
            <person name="Dos Santos P."/>
            <person name="Goldman B.S."/>
            <person name="Ertesvaag H."/>
            <person name="Espin G."/>
            <person name="Rubio L.M."/>
            <person name="Valla S."/>
            <person name="Almeida N.F."/>
            <person name="Balasubramanian D."/>
            <person name="Cromes L."/>
            <person name="Curatti L."/>
            <person name="Du Z."/>
            <person name="Godsy E."/>
            <person name="Goodner B."/>
            <person name="Hellner-Burris K."/>
            <person name="Hernandez J.A."/>
            <person name="Houmiel K."/>
            <person name="Imperial J."/>
            <person name="Kennedy C."/>
            <person name="Larson T.J."/>
            <person name="Latreille P."/>
            <person name="Ligon L.S."/>
            <person name="Lu J."/>
            <person name="Maerk M."/>
            <person name="Miller N.M."/>
            <person name="Norton S."/>
            <person name="O'Carroll I.P."/>
            <person name="Paulsen I."/>
            <person name="Raulfs E.C."/>
            <person name="Roemer R."/>
            <person name="Rosser J."/>
            <person name="Segura D."/>
            <person name="Slater S."/>
            <person name="Stricklin S.L."/>
            <person name="Studholme D.J."/>
            <person name="Sun J."/>
            <person name="Viana C.J."/>
            <person name="Wallin E."/>
            <person name="Wang B."/>
            <person name="Wheeler C."/>
            <person name="Zhu H."/>
            <person name="Dean D.R."/>
            <person name="Dixon R."/>
            <person name="Wood D."/>
        </authorList>
    </citation>
    <scope>NUCLEOTIDE SEQUENCE [LARGE SCALE GENOMIC DNA]</scope>
    <source>
        <strain>DJ / ATCC BAA-1303</strain>
    </source>
</reference>
<gene>
    <name evidence="1" type="primary">nuoC</name>
    <name evidence="1" type="synonym">nuoCD</name>
    <name evidence="1" type="synonym">nuoD</name>
    <name type="ordered locus">Avin_28460</name>
</gene>
<dbReference type="EC" id="7.1.1.-" evidence="1"/>
<dbReference type="EMBL" id="CP001157">
    <property type="protein sequence ID" value="ACO79018.1"/>
    <property type="molecule type" value="Genomic_DNA"/>
</dbReference>
<dbReference type="RefSeq" id="WP_012701405.1">
    <property type="nucleotide sequence ID" value="NC_012560.1"/>
</dbReference>
<dbReference type="SMR" id="C1DL16"/>
<dbReference type="STRING" id="322710.Avin_28460"/>
<dbReference type="EnsemblBacteria" id="ACO79018">
    <property type="protein sequence ID" value="ACO79018"/>
    <property type="gene ID" value="Avin_28460"/>
</dbReference>
<dbReference type="GeneID" id="88185961"/>
<dbReference type="KEGG" id="avn:Avin_28460"/>
<dbReference type="eggNOG" id="COG0649">
    <property type="taxonomic scope" value="Bacteria"/>
</dbReference>
<dbReference type="eggNOG" id="COG0852">
    <property type="taxonomic scope" value="Bacteria"/>
</dbReference>
<dbReference type="HOGENOM" id="CLU_015134_3_2_6"/>
<dbReference type="OrthoDB" id="9801496at2"/>
<dbReference type="Proteomes" id="UP000002424">
    <property type="component" value="Chromosome"/>
</dbReference>
<dbReference type="GO" id="GO:0030964">
    <property type="term" value="C:NADH dehydrogenase complex"/>
    <property type="evidence" value="ECO:0007669"/>
    <property type="project" value="InterPro"/>
</dbReference>
<dbReference type="GO" id="GO:0005886">
    <property type="term" value="C:plasma membrane"/>
    <property type="evidence" value="ECO:0007669"/>
    <property type="project" value="UniProtKB-SubCell"/>
</dbReference>
<dbReference type="GO" id="GO:0051287">
    <property type="term" value="F:NAD binding"/>
    <property type="evidence" value="ECO:0007669"/>
    <property type="project" value="InterPro"/>
</dbReference>
<dbReference type="GO" id="GO:0008137">
    <property type="term" value="F:NADH dehydrogenase (ubiquinone) activity"/>
    <property type="evidence" value="ECO:0007669"/>
    <property type="project" value="InterPro"/>
</dbReference>
<dbReference type="GO" id="GO:0050136">
    <property type="term" value="F:NADH:ubiquinone reductase (non-electrogenic) activity"/>
    <property type="evidence" value="ECO:0007669"/>
    <property type="project" value="UniProtKB-UniRule"/>
</dbReference>
<dbReference type="GO" id="GO:0048038">
    <property type="term" value="F:quinone binding"/>
    <property type="evidence" value="ECO:0007669"/>
    <property type="project" value="UniProtKB-KW"/>
</dbReference>
<dbReference type="FunFam" id="1.10.645.10:FF:000001">
    <property type="entry name" value="NADH-quinone oxidoreductase subunit C/D"/>
    <property type="match status" value="1"/>
</dbReference>
<dbReference type="FunFam" id="3.30.460.80:FF:000001">
    <property type="entry name" value="NADH-quinone oxidoreductase subunit C/D"/>
    <property type="match status" value="1"/>
</dbReference>
<dbReference type="Gene3D" id="1.10.645.10">
    <property type="entry name" value="Cytochrome-c3 Hydrogenase, chain B"/>
    <property type="match status" value="1"/>
</dbReference>
<dbReference type="Gene3D" id="3.30.460.80">
    <property type="entry name" value="NADH:ubiquinone oxidoreductase, 30kDa subunit"/>
    <property type="match status" value="1"/>
</dbReference>
<dbReference type="HAMAP" id="MF_01357">
    <property type="entry name" value="NDH1_NuoC"/>
    <property type="match status" value="1"/>
</dbReference>
<dbReference type="HAMAP" id="MF_01359">
    <property type="entry name" value="NDH1_NuoCD_1"/>
    <property type="match status" value="1"/>
</dbReference>
<dbReference type="HAMAP" id="MF_01358">
    <property type="entry name" value="NDH1_NuoD"/>
    <property type="match status" value="1"/>
</dbReference>
<dbReference type="InterPro" id="IPR010218">
    <property type="entry name" value="NADH_DH_suC"/>
</dbReference>
<dbReference type="InterPro" id="IPR023062">
    <property type="entry name" value="NADH_DH_suCD"/>
</dbReference>
<dbReference type="InterPro" id="IPR001135">
    <property type="entry name" value="NADH_Q_OxRdtase_suD"/>
</dbReference>
<dbReference type="InterPro" id="IPR037232">
    <property type="entry name" value="NADH_quin_OxRdtase_su_C/D-like"/>
</dbReference>
<dbReference type="InterPro" id="IPR001268">
    <property type="entry name" value="NADH_UbQ_OxRdtase_30kDa_su"/>
</dbReference>
<dbReference type="InterPro" id="IPR014029">
    <property type="entry name" value="NADH_UbQ_OxRdtase_49kDa_CS"/>
</dbReference>
<dbReference type="InterPro" id="IPR022885">
    <property type="entry name" value="NDH1_su_D/H"/>
</dbReference>
<dbReference type="InterPro" id="IPR029014">
    <property type="entry name" value="NiFe-Hase_large"/>
</dbReference>
<dbReference type="NCBIfam" id="TIGR01961">
    <property type="entry name" value="NuoC_fam"/>
    <property type="match status" value="1"/>
</dbReference>
<dbReference type="NCBIfam" id="TIGR01962">
    <property type="entry name" value="NuoD"/>
    <property type="match status" value="1"/>
</dbReference>
<dbReference type="NCBIfam" id="NF004739">
    <property type="entry name" value="PRK06075.1"/>
    <property type="match status" value="1"/>
</dbReference>
<dbReference type="NCBIfam" id="NF008728">
    <property type="entry name" value="PRK11742.1"/>
    <property type="match status" value="1"/>
</dbReference>
<dbReference type="PANTHER" id="PTHR11993:SF45">
    <property type="entry name" value="NADH-QUINONE OXIDOREDUCTASE SUBUNIT C_D"/>
    <property type="match status" value="1"/>
</dbReference>
<dbReference type="PANTHER" id="PTHR11993">
    <property type="entry name" value="NADH-UBIQUINONE OXIDOREDUCTASE 49 KDA SUBUNIT"/>
    <property type="match status" value="1"/>
</dbReference>
<dbReference type="Pfam" id="PF00329">
    <property type="entry name" value="Complex1_30kDa"/>
    <property type="match status" value="1"/>
</dbReference>
<dbReference type="Pfam" id="PF00346">
    <property type="entry name" value="Complex1_49kDa"/>
    <property type="match status" value="1"/>
</dbReference>
<dbReference type="SUPFAM" id="SSF56762">
    <property type="entry name" value="HydB/Nqo4-like"/>
    <property type="match status" value="1"/>
</dbReference>
<dbReference type="SUPFAM" id="SSF143243">
    <property type="entry name" value="Nqo5-like"/>
    <property type="match status" value="1"/>
</dbReference>
<dbReference type="PROSITE" id="PS00535">
    <property type="entry name" value="COMPLEX1_49K"/>
    <property type="match status" value="1"/>
</dbReference>
<keyword id="KW-0997">Cell inner membrane</keyword>
<keyword id="KW-1003">Cell membrane</keyword>
<keyword id="KW-0472">Membrane</keyword>
<keyword id="KW-0511">Multifunctional enzyme</keyword>
<keyword id="KW-0520">NAD</keyword>
<keyword id="KW-0874">Quinone</keyword>
<keyword id="KW-1278">Translocase</keyword>
<keyword id="KW-0813">Transport</keyword>
<keyword id="KW-0830">Ubiquinone</keyword>
<sequence length="593" mass="68234">MTADSVLSIPPYKADDQDVVAELNSRFGAETFTVQSTCTDMPVLWVAREKLIEVLRFLRNLPRPYVMLYDLHGVDERLRTQRRGLPEADFSVFYHLLSIERNSDVMIKVALKEGDLKLPSATGIWPNANWYEREIWDMYGIHIEGHPHLTRILMPPTWEGHPLRKDYPARATEFDPYSLSAAKQDLEQEALRFKPEEWGMKRGGEHEDFMFLNLGPNHPSAHGAFRIILQLDGEEIVDCVPEIGYHHRGAEKMAERQSWHSFIPYTDRIDYLGGVMNNLPYVLAVEKLAGIKVPQRVDVIRVMMAEFFRILNHLLYLGTYIQDVGAMTPVFFTFTDRQRAYKVVEAITGFRLHPAWYRIGGVAHDLPRGWDALVKEFVEWMPKRLDEYEKAALQNSILRGRTMDVARYDTRQALEWGVTGAGLRATGLDFDLRKARPYSGYENFEFEVPLAHNGDAYDRCMVKLGEMRQSLRIIEQCRRNMPEGPYKADHPLTTPPPKERTLQHIETLITHFLQVSWGPVMPANESFQMIEATKGINSYYLTSDGSTMSYRTRIRTPSYAHLQQIPSVIRGSMVADLIAYLGSIDFVMADVDR</sequence>
<evidence type="ECO:0000255" key="1">
    <source>
        <dbReference type="HAMAP-Rule" id="MF_01359"/>
    </source>
</evidence>
<feature type="chain" id="PRO_1000214869" description="NADH-quinone oxidoreductase subunit C/D">
    <location>
        <begin position="1"/>
        <end position="593"/>
    </location>
</feature>
<feature type="region of interest" description="NADH dehydrogenase I subunit C" evidence="1">
    <location>
        <begin position="1"/>
        <end position="184"/>
    </location>
</feature>
<feature type="region of interest" description="NADH dehydrogenase I subunit D" evidence="1">
    <location>
        <begin position="208"/>
        <end position="593"/>
    </location>
</feature>
<protein>
    <recommendedName>
        <fullName evidence="1">NADH-quinone oxidoreductase subunit C/D</fullName>
        <ecNumber evidence="1">7.1.1.-</ecNumber>
    </recommendedName>
    <alternativeName>
        <fullName evidence="1">NADH dehydrogenase I subunit C/D</fullName>
    </alternativeName>
    <alternativeName>
        <fullName evidence="1">NDH-1 subunit C/D</fullName>
    </alternativeName>
</protein>
<organism>
    <name type="scientific">Azotobacter vinelandii (strain DJ / ATCC BAA-1303)</name>
    <dbReference type="NCBI Taxonomy" id="322710"/>
    <lineage>
        <taxon>Bacteria</taxon>
        <taxon>Pseudomonadati</taxon>
        <taxon>Pseudomonadota</taxon>
        <taxon>Gammaproteobacteria</taxon>
        <taxon>Pseudomonadales</taxon>
        <taxon>Pseudomonadaceae</taxon>
        <taxon>Azotobacter</taxon>
    </lineage>
</organism>